<proteinExistence type="evidence at transcript level"/>
<gene>
    <name type="primary">ubl4aa</name>
</gene>
<organism>
    <name type="scientific">Salmo salar</name>
    <name type="common">Atlantic salmon</name>
    <dbReference type="NCBI Taxonomy" id="8030"/>
    <lineage>
        <taxon>Eukaryota</taxon>
        <taxon>Metazoa</taxon>
        <taxon>Chordata</taxon>
        <taxon>Craniata</taxon>
        <taxon>Vertebrata</taxon>
        <taxon>Euteleostomi</taxon>
        <taxon>Actinopterygii</taxon>
        <taxon>Neopterygii</taxon>
        <taxon>Teleostei</taxon>
        <taxon>Protacanthopterygii</taxon>
        <taxon>Salmoniformes</taxon>
        <taxon>Salmonidae</taxon>
        <taxon>Salmoninae</taxon>
        <taxon>Salmo</taxon>
    </lineage>
</organism>
<reference key="1">
    <citation type="journal article" date="2010" name="BMC Genomics">
        <title>Salmo salar and Esox lucius full-length cDNA sequences reveal changes in evolutionary pressures on a post-tetraploidization genome.</title>
        <authorList>
            <person name="Leong J.S."/>
            <person name="Jantzen S.G."/>
            <person name="von Schalburg K.R."/>
            <person name="Cooper G.A."/>
            <person name="Messmer A.M."/>
            <person name="Liao N.Y."/>
            <person name="Munro S."/>
            <person name="Moore R."/>
            <person name="Holt R.A."/>
            <person name="Jones S.J."/>
            <person name="Davidson W.S."/>
            <person name="Koop B.F."/>
        </authorList>
    </citation>
    <scope>NUCLEOTIDE SEQUENCE [LARGE SCALE MRNA]</scope>
    <source>
        <tissue>Brain</tissue>
    </source>
</reference>
<keyword id="KW-0963">Cytoplasm</keyword>
<keyword id="KW-1185">Reference proteome</keyword>
<keyword id="KW-0813">Transport</keyword>
<feature type="chain" id="PRO_0000403746" description="Ubiquitin-like protein 4A-A">
    <location>
        <begin position="1"/>
        <end position="154"/>
    </location>
</feature>
<feature type="domain" description="Ubiquitin-like" evidence="2">
    <location>
        <begin position="1"/>
        <end position="76"/>
    </location>
</feature>
<evidence type="ECO:0000250" key="1"/>
<evidence type="ECO:0000255" key="2">
    <source>
        <dbReference type="PROSITE-ProRule" id="PRU00214"/>
    </source>
</evidence>
<protein>
    <recommendedName>
        <fullName>Ubiquitin-like protein 4A-A</fullName>
    </recommendedName>
</protein>
<accession>B5XFI8</accession>
<dbReference type="EMBL" id="BT049807">
    <property type="protein sequence ID" value="ACI69608.1"/>
    <property type="molecule type" value="mRNA"/>
</dbReference>
<dbReference type="RefSeq" id="XP_014027453.1">
    <property type="nucleotide sequence ID" value="XM_014171978.1"/>
</dbReference>
<dbReference type="SMR" id="B5XFI8"/>
<dbReference type="STRING" id="8030.ENSSSAP00000053905"/>
<dbReference type="PaxDb" id="8030-ENSSSAP00000053905"/>
<dbReference type="Ensembl" id="ENSSSAT00020187935">
    <property type="protein sequence ID" value="ENSSSAP00020142120"/>
    <property type="gene ID" value="ENSSSAG00020079120"/>
</dbReference>
<dbReference type="Ensembl" id="ENSSSAT00070038104">
    <property type="protein sequence ID" value="ENSSSAP00070036360"/>
    <property type="gene ID" value="ENSSSAG00070023884"/>
</dbReference>
<dbReference type="Ensembl" id="ENSSSAT00075059147">
    <property type="protein sequence ID" value="ENSSSAP00075041541"/>
    <property type="gene ID" value="ENSSSAG00075028324"/>
</dbReference>
<dbReference type="GeneID" id="106585593"/>
<dbReference type="KEGG" id="sasa:106585593"/>
<dbReference type="OMA" id="SMDTSYM"/>
<dbReference type="OrthoDB" id="409927at7898"/>
<dbReference type="Proteomes" id="UP000087266">
    <property type="component" value="Chromosome ssa24"/>
</dbReference>
<dbReference type="Bgee" id="ENSSSAG00000052784">
    <property type="expression patterns" value="Expressed in immature gonad and 26 other cell types or tissues"/>
</dbReference>
<dbReference type="GO" id="GO:0071818">
    <property type="term" value="C:BAT3 complex"/>
    <property type="evidence" value="ECO:0000250"/>
    <property type="project" value="UniProtKB"/>
</dbReference>
<dbReference type="GO" id="GO:0005829">
    <property type="term" value="C:cytosol"/>
    <property type="evidence" value="ECO:0000250"/>
    <property type="project" value="UniProtKB"/>
</dbReference>
<dbReference type="GO" id="GO:0051087">
    <property type="term" value="F:protein-folding chaperone binding"/>
    <property type="evidence" value="ECO:0007669"/>
    <property type="project" value="TreeGrafter"/>
</dbReference>
<dbReference type="GO" id="GO:0006620">
    <property type="term" value="P:post-translational protein targeting to endoplasmic reticulum membrane"/>
    <property type="evidence" value="ECO:0007669"/>
    <property type="project" value="InterPro"/>
</dbReference>
<dbReference type="GO" id="GO:0071816">
    <property type="term" value="P:tail-anchored membrane protein insertion into ER membrane"/>
    <property type="evidence" value="ECO:0000250"/>
    <property type="project" value="UniProtKB"/>
</dbReference>
<dbReference type="CDD" id="cd01807">
    <property type="entry name" value="Ubl_UBL4A_like"/>
    <property type="match status" value="1"/>
</dbReference>
<dbReference type="FunFam" id="3.10.20.90:FF:000144">
    <property type="entry name" value="Ubiquitin-like protein 4A"/>
    <property type="match status" value="1"/>
</dbReference>
<dbReference type="Gene3D" id="3.10.20.90">
    <property type="entry name" value="Phosphatidylinositol 3-kinase Catalytic Subunit, Chain A, domain 1"/>
    <property type="match status" value="1"/>
</dbReference>
<dbReference type="InterPro" id="IPR000626">
    <property type="entry name" value="Ubiquitin-like_dom"/>
</dbReference>
<dbReference type="InterPro" id="IPR029071">
    <property type="entry name" value="Ubiquitin-like_domsf"/>
</dbReference>
<dbReference type="InterPro" id="IPR019954">
    <property type="entry name" value="Ubiquitin_CS"/>
</dbReference>
<dbReference type="InterPro" id="IPR019956">
    <property type="entry name" value="Ubiquitin_dom"/>
</dbReference>
<dbReference type="InterPro" id="IPR041421">
    <property type="entry name" value="Ubl4_C_TUGS"/>
</dbReference>
<dbReference type="InterPro" id="IPR047154">
    <property type="entry name" value="UBL4A-like"/>
</dbReference>
<dbReference type="InterPro" id="IPR044724">
    <property type="entry name" value="Ubl_UBL4A-like"/>
</dbReference>
<dbReference type="PANTHER" id="PTHR46555">
    <property type="entry name" value="UBIQUITIN-LIKE PROTEIN 4A"/>
    <property type="match status" value="1"/>
</dbReference>
<dbReference type="PANTHER" id="PTHR46555:SF1">
    <property type="entry name" value="UBIQUITIN-LIKE PROTEIN 4A"/>
    <property type="match status" value="1"/>
</dbReference>
<dbReference type="Pfam" id="PF17840">
    <property type="entry name" value="Tugs"/>
    <property type="match status" value="1"/>
</dbReference>
<dbReference type="Pfam" id="PF00240">
    <property type="entry name" value="ubiquitin"/>
    <property type="match status" value="1"/>
</dbReference>
<dbReference type="PRINTS" id="PR00348">
    <property type="entry name" value="UBIQUITIN"/>
</dbReference>
<dbReference type="SMART" id="SM00213">
    <property type="entry name" value="UBQ"/>
    <property type="match status" value="1"/>
</dbReference>
<dbReference type="SUPFAM" id="SSF54236">
    <property type="entry name" value="Ubiquitin-like"/>
    <property type="match status" value="1"/>
</dbReference>
<dbReference type="PROSITE" id="PS00299">
    <property type="entry name" value="UBIQUITIN_1"/>
    <property type="match status" value="1"/>
</dbReference>
<dbReference type="PROSITE" id="PS50053">
    <property type="entry name" value="UBIQUITIN_2"/>
    <property type="match status" value="1"/>
</dbReference>
<comment type="function">
    <text evidence="1">Component of the BAT3 complex, a multiprotein complex involved in the post-translational delivery of tail-anchored (TA) membrane proteins to the endoplasmic reticulum membrane. TA membrane proteins, also named type II transmembrane proteins, contain a single C-terminal transmembrane region (By similarity).</text>
</comment>
<comment type="subunit">
    <text evidence="1">Component of the BAT3 complex.</text>
</comment>
<comment type="subcellular location">
    <subcellularLocation>
        <location evidence="1">Cytoplasm</location>
        <location evidence="1">Cytosol</location>
    </subcellularLocation>
</comment>
<name>UB4AA_SALSA</name>
<sequence length="154" mass="16923">MILTVKPLQGKECNVQVTEDEKVSTVKELVSERLNIPANQQRLLYKGKALADEHRLSDYSIGPEAKLNLVVRPAGERSGVAGMASSSSAVSGVWQTLSTVLAKHFSPADAAKVQEQLVKDYERSLRQLSLDDIERLAGRLLHPDSEGMDTSYMD</sequence>